<gene>
    <name type="primary">gerQB</name>
</gene>
<dbReference type="EMBL" id="AY037930">
    <property type="protein sequence ID" value="AAK63175.1"/>
    <property type="molecule type" value="Genomic_DNA"/>
</dbReference>
<dbReference type="RefSeq" id="WP_000809707.1">
    <property type="nucleotide sequence ID" value="NZ_VEIQ01000003.1"/>
</dbReference>
<dbReference type="SMR" id="Q93LK8"/>
<dbReference type="GO" id="GO:0016020">
    <property type="term" value="C:membrane"/>
    <property type="evidence" value="ECO:0007669"/>
    <property type="project" value="UniProtKB-SubCell"/>
</dbReference>
<dbReference type="GO" id="GO:0009847">
    <property type="term" value="P:spore germination"/>
    <property type="evidence" value="ECO:0007669"/>
    <property type="project" value="InterPro"/>
</dbReference>
<dbReference type="InterPro" id="IPR004761">
    <property type="entry name" value="Spore_GerAB"/>
</dbReference>
<dbReference type="NCBIfam" id="TIGR00912">
    <property type="entry name" value="2A0309"/>
    <property type="match status" value="1"/>
</dbReference>
<dbReference type="PANTHER" id="PTHR34975">
    <property type="entry name" value="SPORE GERMINATION PROTEIN A2"/>
    <property type="match status" value="1"/>
</dbReference>
<dbReference type="PANTHER" id="PTHR34975:SF2">
    <property type="entry name" value="SPORE GERMINATION PROTEIN A2"/>
    <property type="match status" value="1"/>
</dbReference>
<dbReference type="Pfam" id="PF03845">
    <property type="entry name" value="Spore_permease"/>
    <property type="match status" value="1"/>
</dbReference>
<protein>
    <recommendedName>
        <fullName>Spore germination protein GerQB</fullName>
    </recommendedName>
</protein>
<keyword id="KW-0309">Germination</keyword>
<keyword id="KW-0472">Membrane</keyword>
<keyword id="KW-0812">Transmembrane</keyword>
<keyword id="KW-1133">Transmembrane helix</keyword>
<keyword id="KW-0813">Transport</keyword>
<reference key="1">
    <citation type="journal article" date="2002" name="Microbiology">
        <title>Germination of Bacillus cereus spores in response to L-alanine and to inosine: the roles of gerL and gerQ operons.</title>
        <authorList>
            <person name="Barlass P.J."/>
            <person name="Houston C.W."/>
            <person name="Clements M.O."/>
            <person name="Moir A."/>
        </authorList>
    </citation>
    <scope>NUCLEOTIDE SEQUENCE [GENOMIC DNA]</scope>
    <scope>FUNCTION</scope>
    <source>
        <strain>ATCC 10876 / DSM 9378 / NRRL B-569</strain>
    </source>
</reference>
<proteinExistence type="inferred from homology"/>
<organism>
    <name type="scientific">Bacillus cereus</name>
    <dbReference type="NCBI Taxonomy" id="1396"/>
    <lineage>
        <taxon>Bacteria</taxon>
        <taxon>Bacillati</taxon>
        <taxon>Bacillota</taxon>
        <taxon>Bacilli</taxon>
        <taxon>Bacillales</taxon>
        <taxon>Bacillaceae</taxon>
        <taxon>Bacillus</taxon>
        <taxon>Bacillus cereus group</taxon>
    </lineage>
</organism>
<evidence type="ECO:0000255" key="1"/>
<evidence type="ECO:0000269" key="2">
    <source>
    </source>
</evidence>
<evidence type="ECO:0000305" key="3"/>
<sequence>MKQIPIEYQVSPYMVFFLIITIQMGVGMLGFERISAKLVGNDAWISTLLFGISVNVMIWIIYQILNQGNGDIIAINQNVLGKWIGGLLNFIFLSYIVLLGATTLHTYIEVVHVWMFPSISSWVIAGAFLGLCYYIVTGGFRVVAGIGFFGIVIPSILIFTFFYPLQYADFRNLFPIAQHSFLEIMKGMKGNMFSFFGFEMLLLYYPFIKKARTSQKYAHYANLVTTIVYTYLMILTLAFFSEKQLANAIWAYLSMIKIIQFPFIERFEYIIVSVWAFFILPNVSFTLWGVSRGIKEALGIKQKYVLPVIILFIFILSFFLNNRNKINLLNTWTGQIGFVYIYVYLPVLWLIQTAKIKLRR</sequence>
<name>GERQB_BACCE</name>
<accession>Q93LK8</accession>
<comment type="function">
    <text evidence="2">Required for the germination response to inosine. Has no role in L-alanine germination.</text>
</comment>
<comment type="subcellular location">
    <subcellularLocation>
        <location evidence="3">Membrane</location>
        <topology evidence="3">Multi-pass membrane protein</topology>
    </subcellularLocation>
</comment>
<comment type="similarity">
    <text evidence="3">Belongs to the amino acid-polyamine-organocation (APC) superfamily. Spore germination protein (SGP) (TC 2.A.3.9) family.</text>
</comment>
<feature type="chain" id="PRO_0000425705" description="Spore germination protein GerQB">
    <location>
        <begin position="1"/>
        <end position="360"/>
    </location>
</feature>
<feature type="transmembrane region" description="Helical" evidence="1">
    <location>
        <begin position="11"/>
        <end position="31"/>
    </location>
</feature>
<feature type="transmembrane region" description="Helical" evidence="1">
    <location>
        <begin position="45"/>
        <end position="65"/>
    </location>
</feature>
<feature type="transmembrane region" description="Helical" evidence="1">
    <location>
        <begin position="84"/>
        <end position="104"/>
    </location>
</feature>
<feature type="transmembrane region" description="Helical" evidence="1">
    <location>
        <begin position="116"/>
        <end position="136"/>
    </location>
</feature>
<feature type="transmembrane region" description="Helical" evidence="1">
    <location>
        <begin position="142"/>
        <end position="162"/>
    </location>
</feature>
<feature type="transmembrane region" description="Helical" evidence="1">
    <location>
        <begin position="188"/>
        <end position="208"/>
    </location>
</feature>
<feature type="transmembrane region" description="Helical" evidence="1">
    <location>
        <begin position="220"/>
        <end position="240"/>
    </location>
</feature>
<feature type="transmembrane region" description="Helical" evidence="1">
    <location>
        <begin position="270"/>
        <end position="290"/>
    </location>
</feature>
<feature type="transmembrane region" description="Helical" evidence="1">
    <location>
        <begin position="300"/>
        <end position="320"/>
    </location>
</feature>
<feature type="transmembrane region" description="Helical" evidence="1">
    <location>
        <begin position="331"/>
        <end position="351"/>
    </location>
</feature>